<gene>
    <name evidence="2" type="primary">ALMA3</name>
    <name evidence="4" type="ORF">EMIHUDRAFT_94744</name>
</gene>
<name>ALMA3_EMIH1</name>
<accession>R1G6M4</accession>
<feature type="chain" id="PRO_0000433890" description="Dimethylsulfoniopropionate lyase 3">
    <location>
        <begin position="1"/>
        <end position="383"/>
    </location>
</feature>
<keyword id="KW-0456">Lyase</keyword>
<keyword id="KW-1185">Reference proteome</keyword>
<organism>
    <name type="scientific">Emiliania huxleyi (strain CCMP1516)</name>
    <dbReference type="NCBI Taxonomy" id="280463"/>
    <lineage>
        <taxon>Eukaryota</taxon>
        <taxon>Haptista</taxon>
        <taxon>Haptophyta</taxon>
        <taxon>Prymnesiophyceae</taxon>
        <taxon>Isochrysidales</taxon>
        <taxon>Noelaerhabdaceae</taxon>
        <taxon>Emiliania</taxon>
    </lineage>
</organism>
<evidence type="ECO:0000250" key="1">
    <source>
        <dbReference type="UniProtKB" id="P0DN21"/>
    </source>
</evidence>
<evidence type="ECO:0000303" key="2">
    <source>
    </source>
</evidence>
<evidence type="ECO:0000305" key="3"/>
<evidence type="ECO:0000312" key="4">
    <source>
        <dbReference type="EMBL" id="EOD41464.1"/>
    </source>
</evidence>
<dbReference type="EC" id="4.4.1.3" evidence="1"/>
<dbReference type="EMBL" id="KB863010">
    <property type="protein sequence ID" value="EOD41464.1"/>
    <property type="molecule type" value="Genomic_DNA"/>
</dbReference>
<dbReference type="RefSeq" id="XP_005793893.1">
    <property type="nucleotide sequence ID" value="XM_005793836.1"/>
</dbReference>
<dbReference type="SMR" id="R1G6M4"/>
<dbReference type="PaxDb" id="2903-EOD41464"/>
<dbReference type="EnsemblProtists" id="EOD41464">
    <property type="protein sequence ID" value="EOD41464"/>
    <property type="gene ID" value="EMIHUDRAFT_94744"/>
</dbReference>
<dbReference type="GeneID" id="17286734"/>
<dbReference type="KEGG" id="ehx:EMIHUDRAFT_94744"/>
<dbReference type="eggNOG" id="ENOG502RZWQ">
    <property type="taxonomic scope" value="Eukaryota"/>
</dbReference>
<dbReference type="HOGENOM" id="CLU_722474_0_0_1"/>
<dbReference type="Proteomes" id="UP000013827">
    <property type="component" value="Unassembled WGS sequence"/>
</dbReference>
<dbReference type="GO" id="GO:0047869">
    <property type="term" value="F:dimethylpropiothetin dethiomethylase activity"/>
    <property type="evidence" value="ECO:0007669"/>
    <property type="project" value="UniProtKB-EC"/>
</dbReference>
<sequence length="383" mass="42110">MGCAGSTLRSGASFEDSRLAAIEDSRFHEVGHHAQFEDSRLAAIEDSRFHEVGHHAQFDEGGRFKQLPPANDDAKLLVADHPSLGVIRLDYDYPPALGDVDHPGSFYYDVFYRVVPGLTFELCQSGELPDDVKQRFIDAITWLDEQGVAGITGDCGFFMYFQALARSVTSKPVFMSSLCQLPAVVCAYAADEQIALFTANGESLKPMREIIKKECGVDPDDTRFVIVGCEDVPGFEAVANGDRVDVDSVVPHLVRLAEDTVAKHAGTAKPIRAILFECTELPPYSDAVRAATRLPVFDSITCCNSMLASLMDNPRFGVNNWHLSWDGAHTAHRFGDNVPPHLKGKLVNREHPENIARWNASLAERSSFSSAQQESIGRGSRKL</sequence>
<proteinExistence type="inferred from homology"/>
<reference key="1">
    <citation type="journal article" date="2013" name="Nature">
        <title>Pan genome of the phytoplankton Emiliania underpins its global distribution.</title>
        <authorList>
            <person name="Read B.A."/>
            <person name="Kegel J."/>
            <person name="Klute M.J."/>
            <person name="Kuo A."/>
            <person name="Lefebvre S.C."/>
            <person name="Maumus F."/>
            <person name="Mayer C."/>
            <person name="Miller J."/>
            <person name="Monier A."/>
            <person name="Salamov A."/>
            <person name="Young J."/>
            <person name="Aguilar M."/>
            <person name="Claverie J.M."/>
            <person name="Frickenhaus S."/>
            <person name="Gonzalez K."/>
            <person name="Herman E.K."/>
            <person name="Lin Y.C."/>
            <person name="Napier J."/>
            <person name="Ogata H."/>
            <person name="Sarno A.F."/>
            <person name="Shmutz J."/>
            <person name="Schroeder D."/>
            <person name="de Vargas C."/>
            <person name="Verret F."/>
            <person name="von Dassow P."/>
            <person name="Valentin K."/>
            <person name="Van de Peer Y."/>
            <person name="Wheeler G."/>
            <person name="Dacks J.B."/>
            <person name="Delwiche C.F."/>
            <person name="Dyhrman S.T."/>
            <person name="Glockner G."/>
            <person name="John U."/>
            <person name="Richards T."/>
            <person name="Worden A.Z."/>
            <person name="Zhang X."/>
            <person name="Grigoriev I.V."/>
            <person name="Allen A.E."/>
            <person name="Bidle K."/>
            <person name="Borodovsky M."/>
            <person name="Bowler C."/>
            <person name="Brownlee C."/>
            <person name="Cock J.M."/>
            <person name="Elias M."/>
            <person name="Gladyshev V.N."/>
            <person name="Groth M."/>
            <person name="Guda C."/>
            <person name="Hadaegh A."/>
            <person name="Iglesias-Rodriguez M.D."/>
            <person name="Jenkins J."/>
            <person name="Jones B.M."/>
            <person name="Lawson T."/>
            <person name="Leese F."/>
            <person name="Lindquist E."/>
            <person name="Lobanov A."/>
            <person name="Lomsadze A."/>
            <person name="Malik S.B."/>
            <person name="Marsh M.E."/>
            <person name="Mackinder L."/>
            <person name="Mock T."/>
            <person name="Mueller-Roeber B."/>
            <person name="Pagarete A."/>
            <person name="Parker M."/>
            <person name="Probert I."/>
            <person name="Quesneville H."/>
            <person name="Raines C."/>
            <person name="Rensing S.A."/>
            <person name="Riano-Pachon D.M."/>
            <person name="Richier S."/>
            <person name="Rokitta S."/>
            <person name="Shiraiwa Y."/>
            <person name="Soanes D.M."/>
            <person name="van der Giezen M."/>
            <person name="Wahlund T.M."/>
            <person name="Williams B."/>
            <person name="Wilson W."/>
            <person name="Wolfe G."/>
            <person name="Wurch L.L."/>
        </authorList>
    </citation>
    <scope>NUCLEOTIDE SEQUENCE [LARGE SCALE GENOMIC DNA]</scope>
    <source>
        <strain>CCMP1516</strain>
    </source>
</reference>
<reference key="2">
    <citation type="journal article" date="2015" name="Science">
        <title>Identification of the algal dimethyl sulfide-releasing enzyme: A missing link in the marine sulfur cycle.</title>
        <authorList>
            <person name="Alcolombri U."/>
            <person name="Ben-Dor S."/>
            <person name="Feldmesser E."/>
            <person name="Levin Y."/>
            <person name="Tawfik D.S."/>
            <person name="Vardi A."/>
        </authorList>
    </citation>
    <scope>IDENTIFICATION</scope>
</reference>
<protein>
    <recommendedName>
        <fullName evidence="3">Dimethylsulfoniopropionate lyase 3</fullName>
        <shortName evidence="3">DMSP lyase 3</shortName>
        <ecNumber evidence="1">4.4.1.3</ecNumber>
    </recommendedName>
    <alternativeName>
        <fullName evidence="3">Dimethylpropiothetin dethiomethylase 3</fullName>
    </alternativeName>
</protein>
<comment type="function">
    <text evidence="1">Mediates cleavage of dimethylsulfoniopropionate (DMSP) into dimethyl sulfide (DMS) and acrylate. DMS is the principal form by which sulfur is transported from oceans to the atmosphere and is a key component of the ocean sulfur cycle.</text>
</comment>
<comment type="catalytic activity">
    <reaction evidence="1">
        <text>S,S-dimethyl-beta-propiothetin = acrylate + dimethyl sulfide + H(+)</text>
        <dbReference type="Rhea" id="RHEA:19965"/>
        <dbReference type="ChEBI" id="CHEBI:15378"/>
        <dbReference type="ChEBI" id="CHEBI:16457"/>
        <dbReference type="ChEBI" id="CHEBI:17437"/>
        <dbReference type="ChEBI" id="CHEBI:37080"/>
        <dbReference type="EC" id="4.4.1.3"/>
    </reaction>
</comment>
<comment type="subunit">
    <text evidence="1">Homotetramer.</text>
</comment>
<comment type="similarity">
    <text evidence="3">Belongs to the aspartate/glutamate racemases family. ALMA1 subfamily.</text>
</comment>